<proteinExistence type="inferred from homology"/>
<organism>
    <name type="scientific">Shewanella woodyi (strain ATCC 51908 / MS32)</name>
    <dbReference type="NCBI Taxonomy" id="392500"/>
    <lineage>
        <taxon>Bacteria</taxon>
        <taxon>Pseudomonadati</taxon>
        <taxon>Pseudomonadota</taxon>
        <taxon>Gammaproteobacteria</taxon>
        <taxon>Alteromonadales</taxon>
        <taxon>Shewanellaceae</taxon>
        <taxon>Shewanella</taxon>
    </lineage>
</organism>
<reference key="1">
    <citation type="submission" date="2008-02" db="EMBL/GenBank/DDBJ databases">
        <title>Complete sequence of Shewanella woodyi ATCC 51908.</title>
        <authorList>
            <consortium name="US DOE Joint Genome Institute"/>
            <person name="Copeland A."/>
            <person name="Lucas S."/>
            <person name="Lapidus A."/>
            <person name="Glavina del Rio T."/>
            <person name="Dalin E."/>
            <person name="Tice H."/>
            <person name="Bruce D."/>
            <person name="Goodwin L."/>
            <person name="Pitluck S."/>
            <person name="Sims D."/>
            <person name="Brettin T."/>
            <person name="Detter J.C."/>
            <person name="Han C."/>
            <person name="Kuske C.R."/>
            <person name="Schmutz J."/>
            <person name="Larimer F."/>
            <person name="Land M."/>
            <person name="Hauser L."/>
            <person name="Kyrpides N."/>
            <person name="Lykidis A."/>
            <person name="Zhao J.-S."/>
            <person name="Richardson P."/>
        </authorList>
    </citation>
    <scope>NUCLEOTIDE SEQUENCE [LARGE SCALE GENOMIC DNA]</scope>
    <source>
        <strain>ATCC 51908 / MS32</strain>
    </source>
</reference>
<dbReference type="EC" id="2.7.1.30" evidence="1"/>
<dbReference type="EMBL" id="CP000961">
    <property type="protein sequence ID" value="ACA88794.1"/>
    <property type="molecule type" value="Genomic_DNA"/>
</dbReference>
<dbReference type="RefSeq" id="WP_012327120.1">
    <property type="nucleotide sequence ID" value="NC_010506.1"/>
</dbReference>
<dbReference type="SMR" id="B1KKY8"/>
<dbReference type="STRING" id="392500.Swoo_4544"/>
<dbReference type="KEGG" id="swd:Swoo_4544"/>
<dbReference type="eggNOG" id="COG0554">
    <property type="taxonomic scope" value="Bacteria"/>
</dbReference>
<dbReference type="HOGENOM" id="CLU_009281_2_3_6"/>
<dbReference type="UniPathway" id="UPA00618">
    <property type="reaction ID" value="UER00672"/>
</dbReference>
<dbReference type="Proteomes" id="UP000002168">
    <property type="component" value="Chromosome"/>
</dbReference>
<dbReference type="GO" id="GO:0005829">
    <property type="term" value="C:cytosol"/>
    <property type="evidence" value="ECO:0007669"/>
    <property type="project" value="TreeGrafter"/>
</dbReference>
<dbReference type="GO" id="GO:0005524">
    <property type="term" value="F:ATP binding"/>
    <property type="evidence" value="ECO:0007669"/>
    <property type="project" value="UniProtKB-UniRule"/>
</dbReference>
<dbReference type="GO" id="GO:0004370">
    <property type="term" value="F:glycerol kinase activity"/>
    <property type="evidence" value="ECO:0000250"/>
    <property type="project" value="UniProtKB"/>
</dbReference>
<dbReference type="GO" id="GO:0019563">
    <property type="term" value="P:glycerol catabolic process"/>
    <property type="evidence" value="ECO:0007669"/>
    <property type="project" value="UniProtKB-UniRule"/>
</dbReference>
<dbReference type="GO" id="GO:0006071">
    <property type="term" value="P:glycerol metabolic process"/>
    <property type="evidence" value="ECO:0000250"/>
    <property type="project" value="UniProtKB"/>
</dbReference>
<dbReference type="GO" id="GO:0006072">
    <property type="term" value="P:glycerol-3-phosphate metabolic process"/>
    <property type="evidence" value="ECO:0007669"/>
    <property type="project" value="InterPro"/>
</dbReference>
<dbReference type="CDD" id="cd07786">
    <property type="entry name" value="FGGY_EcGK_like"/>
    <property type="match status" value="1"/>
</dbReference>
<dbReference type="FunFam" id="3.30.420.40:FF:000007">
    <property type="entry name" value="Glycerol kinase"/>
    <property type="match status" value="1"/>
</dbReference>
<dbReference type="FunFam" id="3.30.420.40:FF:000008">
    <property type="entry name" value="Glycerol kinase"/>
    <property type="match status" value="1"/>
</dbReference>
<dbReference type="Gene3D" id="3.30.420.40">
    <property type="match status" value="2"/>
</dbReference>
<dbReference type="HAMAP" id="MF_00186">
    <property type="entry name" value="Glycerol_kin"/>
    <property type="match status" value="1"/>
</dbReference>
<dbReference type="InterPro" id="IPR043129">
    <property type="entry name" value="ATPase_NBD"/>
</dbReference>
<dbReference type="InterPro" id="IPR000577">
    <property type="entry name" value="Carb_kinase_FGGY"/>
</dbReference>
<dbReference type="InterPro" id="IPR018483">
    <property type="entry name" value="Carb_kinase_FGGY_CS"/>
</dbReference>
<dbReference type="InterPro" id="IPR018485">
    <property type="entry name" value="FGGY_C"/>
</dbReference>
<dbReference type="InterPro" id="IPR018484">
    <property type="entry name" value="FGGY_N"/>
</dbReference>
<dbReference type="InterPro" id="IPR005999">
    <property type="entry name" value="Glycerol_kin"/>
</dbReference>
<dbReference type="NCBIfam" id="TIGR01311">
    <property type="entry name" value="glycerol_kin"/>
    <property type="match status" value="1"/>
</dbReference>
<dbReference type="NCBIfam" id="NF000756">
    <property type="entry name" value="PRK00047.1"/>
    <property type="match status" value="1"/>
</dbReference>
<dbReference type="PANTHER" id="PTHR10196:SF69">
    <property type="entry name" value="GLYCEROL KINASE"/>
    <property type="match status" value="1"/>
</dbReference>
<dbReference type="PANTHER" id="PTHR10196">
    <property type="entry name" value="SUGAR KINASE"/>
    <property type="match status" value="1"/>
</dbReference>
<dbReference type="Pfam" id="PF02782">
    <property type="entry name" value="FGGY_C"/>
    <property type="match status" value="1"/>
</dbReference>
<dbReference type="Pfam" id="PF00370">
    <property type="entry name" value="FGGY_N"/>
    <property type="match status" value="1"/>
</dbReference>
<dbReference type="PIRSF" id="PIRSF000538">
    <property type="entry name" value="GlpK"/>
    <property type="match status" value="1"/>
</dbReference>
<dbReference type="SUPFAM" id="SSF53067">
    <property type="entry name" value="Actin-like ATPase domain"/>
    <property type="match status" value="2"/>
</dbReference>
<dbReference type="PROSITE" id="PS00933">
    <property type="entry name" value="FGGY_KINASES_1"/>
    <property type="match status" value="1"/>
</dbReference>
<dbReference type="PROSITE" id="PS00445">
    <property type="entry name" value="FGGY_KINASES_2"/>
    <property type="match status" value="1"/>
</dbReference>
<keyword id="KW-0067">ATP-binding</keyword>
<keyword id="KW-0319">Glycerol metabolism</keyword>
<keyword id="KW-0418">Kinase</keyword>
<keyword id="KW-0547">Nucleotide-binding</keyword>
<keyword id="KW-1185">Reference proteome</keyword>
<keyword id="KW-0808">Transferase</keyword>
<comment type="function">
    <text evidence="1">Key enzyme in the regulation of glycerol uptake and metabolism. Catalyzes the phosphorylation of glycerol to yield sn-glycerol 3-phosphate.</text>
</comment>
<comment type="catalytic activity">
    <reaction evidence="1">
        <text>glycerol + ATP = sn-glycerol 3-phosphate + ADP + H(+)</text>
        <dbReference type="Rhea" id="RHEA:21644"/>
        <dbReference type="ChEBI" id="CHEBI:15378"/>
        <dbReference type="ChEBI" id="CHEBI:17754"/>
        <dbReference type="ChEBI" id="CHEBI:30616"/>
        <dbReference type="ChEBI" id="CHEBI:57597"/>
        <dbReference type="ChEBI" id="CHEBI:456216"/>
        <dbReference type="EC" id="2.7.1.30"/>
    </reaction>
</comment>
<comment type="activity regulation">
    <text evidence="1">Inhibited by fructose 1,6-bisphosphate (FBP).</text>
</comment>
<comment type="pathway">
    <text evidence="1">Polyol metabolism; glycerol degradation via glycerol kinase pathway; sn-glycerol 3-phosphate from glycerol: step 1/1.</text>
</comment>
<comment type="similarity">
    <text evidence="1">Belongs to the FGGY kinase family.</text>
</comment>
<sequence>MTKKYVVALDQGTTSSRAIIFDHDANIVSVSQREFTQIYPQAGWVEHDPMEIWASQSSTLIEVIARSGIHASEIASIGITNQRETTVIWDKQTGKPVYNAIVWQCRRSSEICEELKSQGLEAYIRDTTGLLLDPYFSGTKIKWILDNVSGVRERAERGELLFGTIDTWLVWKLTEGKVHVTDPTNASRTLLFNIHTQSWDKRILEALTIPESLLPQVKPSSAVYGKTRIAGEGGEISIAGIAGDQQSALFGQLCTEPGMAKNTYGTGCFLLMNTGEKAVKSNHGLLTTIAIGAKGEVNYALEGSVFMGGATIQWLRDELGLIRDAQDTEYFASRVESTNGVYLVPAFVGLGAPYWDPSARGALVGLTRGSNRNHIIRAALEAIAYQSRDLLDAMAKDSGVELKKLKVDGGAVANDFLMQFQADITSVEVQRPAVTETTAMGAAFLAGLAVGFWDSTSELKHRADIDKSFMPSISEEQKDELYAGWQKAVSQTING</sequence>
<feature type="chain" id="PRO_1000098762" description="Glycerol kinase">
    <location>
        <begin position="1"/>
        <end position="495"/>
    </location>
</feature>
<feature type="binding site" evidence="1">
    <location>
        <position position="13"/>
    </location>
    <ligand>
        <name>ADP</name>
        <dbReference type="ChEBI" id="CHEBI:456216"/>
    </ligand>
</feature>
<feature type="binding site" evidence="1">
    <location>
        <position position="13"/>
    </location>
    <ligand>
        <name>ATP</name>
        <dbReference type="ChEBI" id="CHEBI:30616"/>
    </ligand>
</feature>
<feature type="binding site" evidence="1">
    <location>
        <position position="13"/>
    </location>
    <ligand>
        <name>sn-glycerol 3-phosphate</name>
        <dbReference type="ChEBI" id="CHEBI:57597"/>
    </ligand>
</feature>
<feature type="binding site" evidence="1">
    <location>
        <position position="14"/>
    </location>
    <ligand>
        <name>ATP</name>
        <dbReference type="ChEBI" id="CHEBI:30616"/>
    </ligand>
</feature>
<feature type="binding site" evidence="1">
    <location>
        <position position="15"/>
    </location>
    <ligand>
        <name>ATP</name>
        <dbReference type="ChEBI" id="CHEBI:30616"/>
    </ligand>
</feature>
<feature type="binding site" evidence="1">
    <location>
        <position position="17"/>
    </location>
    <ligand>
        <name>ADP</name>
        <dbReference type="ChEBI" id="CHEBI:456216"/>
    </ligand>
</feature>
<feature type="binding site" evidence="1">
    <location>
        <position position="83"/>
    </location>
    <ligand>
        <name>glycerol</name>
        <dbReference type="ChEBI" id="CHEBI:17754"/>
    </ligand>
</feature>
<feature type="binding site" evidence="1">
    <location>
        <position position="83"/>
    </location>
    <ligand>
        <name>sn-glycerol 3-phosphate</name>
        <dbReference type="ChEBI" id="CHEBI:57597"/>
    </ligand>
</feature>
<feature type="binding site" evidence="1">
    <location>
        <position position="84"/>
    </location>
    <ligand>
        <name>glycerol</name>
        <dbReference type="ChEBI" id="CHEBI:17754"/>
    </ligand>
</feature>
<feature type="binding site" evidence="1">
    <location>
        <position position="84"/>
    </location>
    <ligand>
        <name>sn-glycerol 3-phosphate</name>
        <dbReference type="ChEBI" id="CHEBI:57597"/>
    </ligand>
</feature>
<feature type="binding site" evidence="1">
    <location>
        <position position="135"/>
    </location>
    <ligand>
        <name>glycerol</name>
        <dbReference type="ChEBI" id="CHEBI:17754"/>
    </ligand>
</feature>
<feature type="binding site" evidence="1">
    <location>
        <position position="135"/>
    </location>
    <ligand>
        <name>sn-glycerol 3-phosphate</name>
        <dbReference type="ChEBI" id="CHEBI:57597"/>
    </ligand>
</feature>
<feature type="binding site" evidence="1">
    <location>
        <position position="244"/>
    </location>
    <ligand>
        <name>glycerol</name>
        <dbReference type="ChEBI" id="CHEBI:17754"/>
    </ligand>
</feature>
<feature type="binding site" evidence="1">
    <location>
        <position position="244"/>
    </location>
    <ligand>
        <name>sn-glycerol 3-phosphate</name>
        <dbReference type="ChEBI" id="CHEBI:57597"/>
    </ligand>
</feature>
<feature type="binding site" evidence="1">
    <location>
        <position position="245"/>
    </location>
    <ligand>
        <name>glycerol</name>
        <dbReference type="ChEBI" id="CHEBI:17754"/>
    </ligand>
</feature>
<feature type="binding site" evidence="1">
    <location>
        <position position="266"/>
    </location>
    <ligand>
        <name>ADP</name>
        <dbReference type="ChEBI" id="CHEBI:456216"/>
    </ligand>
</feature>
<feature type="binding site" evidence="1">
    <location>
        <position position="266"/>
    </location>
    <ligand>
        <name>ATP</name>
        <dbReference type="ChEBI" id="CHEBI:30616"/>
    </ligand>
</feature>
<feature type="binding site" evidence="1">
    <location>
        <position position="309"/>
    </location>
    <ligand>
        <name>ADP</name>
        <dbReference type="ChEBI" id="CHEBI:456216"/>
    </ligand>
</feature>
<feature type="binding site" evidence="1">
    <location>
        <position position="309"/>
    </location>
    <ligand>
        <name>ATP</name>
        <dbReference type="ChEBI" id="CHEBI:30616"/>
    </ligand>
</feature>
<feature type="binding site" evidence="1">
    <location>
        <position position="313"/>
    </location>
    <ligand>
        <name>ATP</name>
        <dbReference type="ChEBI" id="CHEBI:30616"/>
    </ligand>
</feature>
<feature type="binding site" evidence="1">
    <location>
        <position position="410"/>
    </location>
    <ligand>
        <name>ADP</name>
        <dbReference type="ChEBI" id="CHEBI:456216"/>
    </ligand>
</feature>
<feature type="binding site" evidence="1">
    <location>
        <position position="410"/>
    </location>
    <ligand>
        <name>ATP</name>
        <dbReference type="ChEBI" id="CHEBI:30616"/>
    </ligand>
</feature>
<feature type="binding site" evidence="1">
    <location>
        <position position="414"/>
    </location>
    <ligand>
        <name>ADP</name>
        <dbReference type="ChEBI" id="CHEBI:456216"/>
    </ligand>
</feature>
<name>GLPK_SHEWM</name>
<protein>
    <recommendedName>
        <fullName evidence="1">Glycerol kinase</fullName>
        <ecNumber evidence="1">2.7.1.30</ecNumber>
    </recommendedName>
    <alternativeName>
        <fullName evidence="1">ATP:glycerol 3-phosphotransferase</fullName>
    </alternativeName>
    <alternativeName>
        <fullName evidence="1">Glycerokinase</fullName>
        <shortName evidence="1">GK</shortName>
    </alternativeName>
</protein>
<evidence type="ECO:0000255" key="1">
    <source>
        <dbReference type="HAMAP-Rule" id="MF_00186"/>
    </source>
</evidence>
<accession>B1KKY8</accession>
<gene>
    <name evidence="1" type="primary">glpK</name>
    <name type="ordered locus">Swoo_4544</name>
</gene>